<organism>
    <name type="scientific">Homo sapiens</name>
    <name type="common">Human</name>
    <dbReference type="NCBI Taxonomy" id="9606"/>
    <lineage>
        <taxon>Eukaryota</taxon>
        <taxon>Metazoa</taxon>
        <taxon>Chordata</taxon>
        <taxon>Craniata</taxon>
        <taxon>Vertebrata</taxon>
        <taxon>Euteleostomi</taxon>
        <taxon>Mammalia</taxon>
        <taxon>Eutheria</taxon>
        <taxon>Euarchontoglires</taxon>
        <taxon>Primates</taxon>
        <taxon>Haplorrhini</taxon>
        <taxon>Catarrhini</taxon>
        <taxon>Hominidae</taxon>
        <taxon>Homo</taxon>
    </lineage>
</organism>
<sequence>MWSAGRGGAAWPVLLGLLLALLVPGGGAAKTGAELVTCGSVLKLLNTHHRVRLHSHDIKYGSGSGQQSVTGVEASDDANSYWRIRGGSEGGCPRGSPVRCGQAVRLTHVLTGKNLHTHHFPSPLSNNQEVSAFGEDGEGDDLDLWTVRCSGQHWEREAAVRFQHVGTSVFLSVTGEQYGSPIRGQHEVHGMPSANTHNTWKAMEGIFIKPSVEPSAGHDEL</sequence>
<evidence type="ECO:0000255" key="1"/>
<evidence type="ECO:0000255" key="2">
    <source>
        <dbReference type="PROSITE-ProRule" id="PRU00131"/>
    </source>
</evidence>
<evidence type="ECO:0000255" key="3">
    <source>
        <dbReference type="PROSITE-ProRule" id="PRU10138"/>
    </source>
</evidence>
<evidence type="ECO:0000269" key="4">
    <source>
    </source>
</evidence>
<evidence type="ECO:0000269" key="5">
    <source>
    </source>
</evidence>
<evidence type="ECO:0000305" key="6"/>
<evidence type="ECO:0007744" key="7">
    <source>
    </source>
</evidence>
<dbReference type="EMBL" id="AB043007">
    <property type="protein sequence ID" value="BAB18277.1"/>
    <property type="molecule type" value="mRNA"/>
</dbReference>
<dbReference type="EMBL" id="AF277316">
    <property type="protein sequence ID" value="AAK69113.1"/>
    <property type="molecule type" value="mRNA"/>
</dbReference>
<dbReference type="EMBL" id="AY359118">
    <property type="protein sequence ID" value="AAQ89476.1"/>
    <property type="molecule type" value="mRNA"/>
</dbReference>
<dbReference type="EMBL" id="CR456570">
    <property type="protein sequence ID" value="CAG30456.1"/>
    <property type="molecule type" value="mRNA"/>
</dbReference>
<dbReference type="EMBL" id="BC006248">
    <property type="status" value="NOT_ANNOTATED_CDS"/>
    <property type="molecule type" value="mRNA"/>
</dbReference>
<dbReference type="EMBL" id="CH471095">
    <property type="protein sequence ID" value="EAW59467.1"/>
    <property type="molecule type" value="Genomic_DNA"/>
</dbReference>
<dbReference type="EMBL" id="BC132849">
    <property type="protein sequence ID" value="AAI32850.1"/>
    <property type="molecule type" value="mRNA"/>
</dbReference>
<dbReference type="EMBL" id="BC132851">
    <property type="protein sequence ID" value="AAI32852.1"/>
    <property type="molecule type" value="mRNA"/>
</dbReference>
<dbReference type="CCDS" id="CCDS13792.1"/>
<dbReference type="PIR" id="JC7587">
    <property type="entry name" value="JC7587"/>
</dbReference>
<dbReference type="RefSeq" id="NP_071327.2">
    <property type="nucleotide sequence ID" value="NM_022044.3"/>
</dbReference>
<dbReference type="SMR" id="Q9HCN8"/>
<dbReference type="BioGRID" id="117254">
    <property type="interactions" value="348"/>
</dbReference>
<dbReference type="CORUM" id="Q9HCN8"/>
<dbReference type="FunCoup" id="Q9HCN8">
    <property type="interactions" value="1596"/>
</dbReference>
<dbReference type="IntAct" id="Q9HCN8">
    <property type="interactions" value="272"/>
</dbReference>
<dbReference type="MINT" id="Q9HCN8"/>
<dbReference type="STRING" id="9606.ENSP00000248958"/>
<dbReference type="GlyGen" id="Q9HCN8">
    <property type="glycosylation" value="2 sites, 2 O-linked glycans (2 sites)"/>
</dbReference>
<dbReference type="iPTMnet" id="Q9HCN8"/>
<dbReference type="MetOSite" id="Q9HCN8"/>
<dbReference type="PhosphoSitePlus" id="Q9HCN8"/>
<dbReference type="SwissPalm" id="Q9HCN8"/>
<dbReference type="BioMuta" id="SDF2L1"/>
<dbReference type="DMDM" id="46397883"/>
<dbReference type="jPOST" id="Q9HCN8"/>
<dbReference type="MassIVE" id="Q9HCN8"/>
<dbReference type="PaxDb" id="9606-ENSP00000248958"/>
<dbReference type="PeptideAtlas" id="Q9HCN8"/>
<dbReference type="ProteomicsDB" id="81781"/>
<dbReference type="Pumba" id="Q9HCN8"/>
<dbReference type="TopDownProteomics" id="Q9HCN8"/>
<dbReference type="Antibodypedia" id="217">
    <property type="antibodies" value="95 antibodies from 18 providers"/>
</dbReference>
<dbReference type="DNASU" id="23753"/>
<dbReference type="Ensembl" id="ENST00000248958.5">
    <property type="protein sequence ID" value="ENSP00000248958.4"/>
    <property type="gene ID" value="ENSG00000128228.5"/>
</dbReference>
<dbReference type="GeneID" id="23753"/>
<dbReference type="KEGG" id="hsa:23753"/>
<dbReference type="MANE-Select" id="ENST00000248958.5">
    <property type="protein sequence ID" value="ENSP00000248958.4"/>
    <property type="RefSeq nucleotide sequence ID" value="NM_022044.3"/>
    <property type="RefSeq protein sequence ID" value="NP_071327.2"/>
</dbReference>
<dbReference type="UCSC" id="uc002zvf.4">
    <property type="organism name" value="human"/>
</dbReference>
<dbReference type="AGR" id="HGNC:10676"/>
<dbReference type="CTD" id="23753"/>
<dbReference type="DisGeNET" id="23753"/>
<dbReference type="GeneCards" id="SDF2L1"/>
<dbReference type="HGNC" id="HGNC:10676">
    <property type="gene designation" value="SDF2L1"/>
</dbReference>
<dbReference type="HPA" id="ENSG00000128228">
    <property type="expression patterns" value="Tissue enhanced (liver)"/>
</dbReference>
<dbReference type="MIM" id="607551">
    <property type="type" value="gene"/>
</dbReference>
<dbReference type="neXtProt" id="NX_Q9HCN8"/>
<dbReference type="OpenTargets" id="ENSG00000128228"/>
<dbReference type="PharmGKB" id="PA35604"/>
<dbReference type="VEuPathDB" id="HostDB:ENSG00000128228"/>
<dbReference type="eggNOG" id="KOG3358">
    <property type="taxonomic scope" value="Eukaryota"/>
</dbReference>
<dbReference type="GeneTree" id="ENSGT00940000160018"/>
<dbReference type="HOGENOM" id="CLU_078126_1_0_1"/>
<dbReference type="InParanoid" id="Q9HCN8"/>
<dbReference type="OMA" id="KPQHGTR"/>
<dbReference type="OrthoDB" id="5588846at2759"/>
<dbReference type="PAN-GO" id="Q9HCN8">
    <property type="GO annotations" value="0 GO annotations based on evolutionary models"/>
</dbReference>
<dbReference type="PhylomeDB" id="Q9HCN8"/>
<dbReference type="TreeFam" id="TF314557"/>
<dbReference type="PathwayCommons" id="Q9HCN8"/>
<dbReference type="SignaLink" id="Q9HCN8"/>
<dbReference type="SIGNOR" id="Q9HCN8"/>
<dbReference type="BioGRID-ORCS" id="23753">
    <property type="hits" value="49 hits in 1154 CRISPR screens"/>
</dbReference>
<dbReference type="ChiTaRS" id="SDF2L1">
    <property type="organism name" value="human"/>
</dbReference>
<dbReference type="GenomeRNAi" id="23753"/>
<dbReference type="Pharos" id="Q9HCN8">
    <property type="development level" value="Tbio"/>
</dbReference>
<dbReference type="PRO" id="PR:Q9HCN8"/>
<dbReference type="Proteomes" id="UP000005640">
    <property type="component" value="Chromosome 22"/>
</dbReference>
<dbReference type="RNAct" id="Q9HCN8">
    <property type="molecule type" value="protein"/>
</dbReference>
<dbReference type="Bgee" id="ENSG00000128228">
    <property type="expression patterns" value="Expressed in mucosa of transverse colon and 129 other cell types or tissues"/>
</dbReference>
<dbReference type="GO" id="GO:0005783">
    <property type="term" value="C:endoplasmic reticulum"/>
    <property type="evidence" value="ECO:0000314"/>
    <property type="project" value="FlyBase"/>
</dbReference>
<dbReference type="GO" id="GO:0034663">
    <property type="term" value="C:endoplasmic reticulum chaperone complex"/>
    <property type="evidence" value="ECO:0007669"/>
    <property type="project" value="Ensembl"/>
</dbReference>
<dbReference type="GO" id="GO:0005788">
    <property type="term" value="C:endoplasmic reticulum lumen"/>
    <property type="evidence" value="ECO:0007669"/>
    <property type="project" value="UniProtKB-SubCell"/>
</dbReference>
<dbReference type="GO" id="GO:0016020">
    <property type="term" value="C:membrane"/>
    <property type="evidence" value="ECO:0007669"/>
    <property type="project" value="Ensembl"/>
</dbReference>
<dbReference type="GO" id="GO:0101031">
    <property type="term" value="C:protein folding chaperone complex"/>
    <property type="evidence" value="ECO:0000353"/>
    <property type="project" value="FlyBase"/>
</dbReference>
<dbReference type="GO" id="GO:0051117">
    <property type="term" value="F:ATPase binding"/>
    <property type="evidence" value="ECO:0007669"/>
    <property type="project" value="Ensembl"/>
</dbReference>
<dbReference type="GO" id="GO:0051787">
    <property type="term" value="F:misfolded protein binding"/>
    <property type="evidence" value="ECO:0000314"/>
    <property type="project" value="FlyBase"/>
</dbReference>
<dbReference type="GO" id="GO:0051087">
    <property type="term" value="F:protein-folding chaperone binding"/>
    <property type="evidence" value="ECO:0007669"/>
    <property type="project" value="Ensembl"/>
</dbReference>
<dbReference type="GO" id="GO:0071218">
    <property type="term" value="P:cellular response to misfolded protein"/>
    <property type="evidence" value="ECO:0007669"/>
    <property type="project" value="Ensembl"/>
</dbReference>
<dbReference type="GO" id="GO:0051085">
    <property type="term" value="P:chaperone cofactor-dependent protein refolding"/>
    <property type="evidence" value="ECO:0000315"/>
    <property type="project" value="FlyBase"/>
</dbReference>
<dbReference type="GO" id="GO:0036503">
    <property type="term" value="P:ERAD pathway"/>
    <property type="evidence" value="ECO:0007669"/>
    <property type="project" value="Ensembl"/>
</dbReference>
<dbReference type="GO" id="GO:0042981">
    <property type="term" value="P:regulation of apoptotic process"/>
    <property type="evidence" value="ECO:0007669"/>
    <property type="project" value="Ensembl"/>
</dbReference>
<dbReference type="CDD" id="cd23293">
    <property type="entry name" value="beta-trefoil_MIR_SDF2_meta"/>
    <property type="match status" value="1"/>
</dbReference>
<dbReference type="FunFam" id="2.80.10.50:FF:000023">
    <property type="entry name" value="Stromal cell-derived factor 2-like 1"/>
    <property type="match status" value="1"/>
</dbReference>
<dbReference type="Gene3D" id="2.80.10.50">
    <property type="match status" value="1"/>
</dbReference>
<dbReference type="InterPro" id="IPR036300">
    <property type="entry name" value="MIR_dom_sf"/>
</dbReference>
<dbReference type="InterPro" id="IPR016093">
    <property type="entry name" value="MIR_motif"/>
</dbReference>
<dbReference type="PANTHER" id="PTHR46809">
    <property type="entry name" value="STROMAL CELL-DERIVED FACTOR 2-LIKE PROTEIN"/>
    <property type="match status" value="1"/>
</dbReference>
<dbReference type="PANTHER" id="PTHR46809:SF1">
    <property type="entry name" value="STROMAL CELL-DERIVED FACTOR 2-LIKE PROTEIN 1"/>
    <property type="match status" value="1"/>
</dbReference>
<dbReference type="Pfam" id="PF02815">
    <property type="entry name" value="MIR"/>
    <property type="match status" value="1"/>
</dbReference>
<dbReference type="SMART" id="SM00472">
    <property type="entry name" value="MIR"/>
    <property type="match status" value="3"/>
</dbReference>
<dbReference type="SUPFAM" id="SSF82109">
    <property type="entry name" value="MIR domain"/>
    <property type="match status" value="1"/>
</dbReference>
<dbReference type="PROSITE" id="PS00014">
    <property type="entry name" value="ER_TARGET"/>
    <property type="match status" value="1"/>
</dbReference>
<dbReference type="PROSITE" id="PS50919">
    <property type="entry name" value="MIR"/>
    <property type="match status" value="3"/>
</dbReference>
<gene>
    <name type="primary">SDF2L1</name>
    <name type="ORF">UNQ1941/PRO4424</name>
</gene>
<reference key="1">
    <citation type="journal article" date="2001" name="Biochem. Biophys. Res. Commun.">
        <title>Murine and human SDF2L1 is an endoplasmic reticulum stress-inducible gene and encodes a new member of the Pmt/rt protein family.</title>
        <authorList>
            <person name="Fukuda S."/>
            <person name="Sumii M."/>
            <person name="Masuda Y."/>
            <person name="Takahashi M."/>
            <person name="Koike N."/>
            <person name="Teishima J."/>
            <person name="Yasumoto H."/>
            <person name="Itamoto T."/>
            <person name="Asahara T."/>
            <person name="Dohi K."/>
            <person name="Kamiya K."/>
        </authorList>
    </citation>
    <scope>NUCLEOTIDE SEQUENCE [MRNA]</scope>
    <scope>TISSUE SPECIFICITY</scope>
    <source>
        <tissue>Testis</tissue>
    </source>
</reference>
<reference key="2">
    <citation type="submission" date="2000-06" db="EMBL/GenBank/DDBJ databases">
        <title>hPWP1-interacting protein 8.</title>
        <authorList>
            <person name="Honore B."/>
        </authorList>
    </citation>
    <scope>NUCLEOTIDE SEQUENCE [MRNA]</scope>
    <source>
        <tissue>Uterus</tissue>
    </source>
</reference>
<reference key="3">
    <citation type="journal article" date="2003" name="Genome Res.">
        <title>The secreted protein discovery initiative (SPDI), a large-scale effort to identify novel human secreted and transmembrane proteins: a bioinformatics assessment.</title>
        <authorList>
            <person name="Clark H.F."/>
            <person name="Gurney A.L."/>
            <person name="Abaya E."/>
            <person name="Baker K."/>
            <person name="Baldwin D.T."/>
            <person name="Brush J."/>
            <person name="Chen J."/>
            <person name="Chow B."/>
            <person name="Chui C."/>
            <person name="Crowley C."/>
            <person name="Currell B."/>
            <person name="Deuel B."/>
            <person name="Dowd P."/>
            <person name="Eaton D."/>
            <person name="Foster J.S."/>
            <person name="Grimaldi C."/>
            <person name="Gu Q."/>
            <person name="Hass P.E."/>
            <person name="Heldens S."/>
            <person name="Huang A."/>
            <person name="Kim H.S."/>
            <person name="Klimowski L."/>
            <person name="Jin Y."/>
            <person name="Johnson S."/>
            <person name="Lee J."/>
            <person name="Lewis L."/>
            <person name="Liao D."/>
            <person name="Mark M.R."/>
            <person name="Robbie E."/>
            <person name="Sanchez C."/>
            <person name="Schoenfeld J."/>
            <person name="Seshagiri S."/>
            <person name="Simmons L."/>
            <person name="Singh J."/>
            <person name="Smith V."/>
            <person name="Stinson J."/>
            <person name="Vagts A."/>
            <person name="Vandlen R.L."/>
            <person name="Watanabe C."/>
            <person name="Wieand D."/>
            <person name="Woods K."/>
            <person name="Xie M.-H."/>
            <person name="Yansura D.G."/>
            <person name="Yi S."/>
            <person name="Yu G."/>
            <person name="Yuan J."/>
            <person name="Zhang M."/>
            <person name="Zhang Z."/>
            <person name="Goddard A.D."/>
            <person name="Wood W.I."/>
            <person name="Godowski P.J."/>
            <person name="Gray A.M."/>
        </authorList>
    </citation>
    <scope>NUCLEOTIDE SEQUENCE [LARGE SCALE MRNA]</scope>
</reference>
<reference key="4">
    <citation type="journal article" date="2004" name="Genome Biol.">
        <title>A genome annotation-driven approach to cloning the human ORFeome.</title>
        <authorList>
            <person name="Collins J.E."/>
            <person name="Wright C.L."/>
            <person name="Edwards C.A."/>
            <person name="Davis M.P."/>
            <person name="Grinham J.A."/>
            <person name="Cole C.G."/>
            <person name="Goward M.E."/>
            <person name="Aguado B."/>
            <person name="Mallya M."/>
            <person name="Mokrab Y."/>
            <person name="Huckle E.J."/>
            <person name="Beare D.M."/>
            <person name="Dunham I."/>
        </authorList>
    </citation>
    <scope>NUCLEOTIDE SEQUENCE [LARGE SCALE MRNA]</scope>
</reference>
<reference key="5">
    <citation type="submission" date="2005-07" db="EMBL/GenBank/DDBJ databases">
        <authorList>
            <person name="Mural R.J."/>
            <person name="Istrail S."/>
            <person name="Sutton G.G."/>
            <person name="Florea L."/>
            <person name="Halpern A.L."/>
            <person name="Mobarry C.M."/>
            <person name="Lippert R."/>
            <person name="Walenz B."/>
            <person name="Shatkay H."/>
            <person name="Dew I."/>
            <person name="Miller J.R."/>
            <person name="Flanigan M.J."/>
            <person name="Edwards N.J."/>
            <person name="Bolanos R."/>
            <person name="Fasulo D."/>
            <person name="Halldorsson B.V."/>
            <person name="Hannenhalli S."/>
            <person name="Turner R."/>
            <person name="Yooseph S."/>
            <person name="Lu F."/>
            <person name="Nusskern D.R."/>
            <person name="Shue B.C."/>
            <person name="Zheng X.H."/>
            <person name="Zhong F."/>
            <person name="Delcher A.L."/>
            <person name="Huson D.H."/>
            <person name="Kravitz S.A."/>
            <person name="Mouchard L."/>
            <person name="Reinert K."/>
            <person name="Remington K.A."/>
            <person name="Clark A.G."/>
            <person name="Waterman M.S."/>
            <person name="Eichler E.E."/>
            <person name="Adams M.D."/>
            <person name="Hunkapiller M.W."/>
            <person name="Myers E.W."/>
            <person name="Venter J.C."/>
        </authorList>
    </citation>
    <scope>NUCLEOTIDE SEQUENCE [LARGE SCALE GENOMIC DNA]</scope>
</reference>
<reference key="6">
    <citation type="journal article" date="2004" name="Genome Res.">
        <title>The status, quality, and expansion of the NIH full-length cDNA project: the Mammalian Gene Collection (MGC).</title>
        <authorList>
            <consortium name="The MGC Project Team"/>
        </authorList>
    </citation>
    <scope>NUCLEOTIDE SEQUENCE [LARGE SCALE MRNA]</scope>
    <source>
        <tissue>Brain</tissue>
        <tissue>Lung</tissue>
    </source>
</reference>
<reference key="7">
    <citation type="journal article" date="2002" name="Mol. Biol. Cell">
        <title>A subset of chaperones and folding enzymes form multiprotein complexes in endoplasmic reticulum to bind nascent proteins.</title>
        <authorList>
            <person name="Meunier L."/>
            <person name="Usherwood Y.-K."/>
            <person name="Chung K.T."/>
            <person name="Hendershot L.M."/>
        </authorList>
    </citation>
    <scope>COMPONENT OF A CHAPERONE COMPLEX</scope>
</reference>
<reference key="8">
    <citation type="journal article" date="2011" name="BMC Syst. Biol.">
        <title>Initial characterization of the human central proteome.</title>
        <authorList>
            <person name="Burkard T.R."/>
            <person name="Planyavsky M."/>
            <person name="Kaupe I."/>
            <person name="Breitwieser F.P."/>
            <person name="Buerckstuemmer T."/>
            <person name="Bennett K.L."/>
            <person name="Superti-Furga G."/>
            <person name="Colinge J."/>
        </authorList>
    </citation>
    <scope>IDENTIFICATION BY MASS SPECTROMETRY [LARGE SCALE ANALYSIS]</scope>
</reference>
<reference key="9">
    <citation type="journal article" date="2013" name="J. Proteome Res.">
        <title>Toward a comprehensive characterization of a human cancer cell phosphoproteome.</title>
        <authorList>
            <person name="Zhou H."/>
            <person name="Di Palma S."/>
            <person name="Preisinger C."/>
            <person name="Peng M."/>
            <person name="Polat A.N."/>
            <person name="Heck A.J."/>
            <person name="Mohammed S."/>
        </authorList>
    </citation>
    <scope>PHOSPHORYLATION [LARGE SCALE ANALYSIS] AT SER-215</scope>
    <scope>IDENTIFICATION BY MASS SPECTROMETRY [LARGE SCALE ANALYSIS]</scope>
    <source>
        <tissue>Erythroleukemia</tissue>
    </source>
</reference>
<reference key="10">
    <citation type="journal article" date="2015" name="Proteomics">
        <title>N-terminome analysis of the human mitochondrial proteome.</title>
        <authorList>
            <person name="Vaca Jacome A.S."/>
            <person name="Rabilloud T."/>
            <person name="Schaeffer-Reiss C."/>
            <person name="Rompais M."/>
            <person name="Ayoub D."/>
            <person name="Lane L."/>
            <person name="Bairoch A."/>
            <person name="Van Dorsselaer A."/>
            <person name="Carapito C."/>
        </authorList>
    </citation>
    <scope>IDENTIFICATION BY MASS SPECTROMETRY [LARGE SCALE ANALYSIS]</scope>
</reference>
<protein>
    <recommendedName>
        <fullName>Stromal cell-derived factor 2-like protein 1</fullName>
        <shortName>SDF2-like protein 1</shortName>
    </recommendedName>
    <alternativeName>
        <fullName>PWP1-interacting protein 8</fullName>
    </alternativeName>
</protein>
<comment type="subunit">
    <text evidence="5">Part of a large chaperone multiprotein complex comprising CABP1, DNAJB11, HSP90B1, HSPA5, HYOU, PDIA2, PDIA4, PPIB, SDF2L1, UGGT1 and very small amounts of ERP29, but not, or at very low levels, CALR nor CANX.</text>
</comment>
<comment type="interaction">
    <interactant intactId="EBI-2339921">
        <id>Q9HCN8</id>
    </interactant>
    <interactant intactId="EBI-347996">
        <id>O43765</id>
        <label>SGTA</label>
    </interactant>
    <organismsDiffer>false</organismsDiffer>
    <experiments>3</experiments>
</comment>
<comment type="interaction">
    <interactant intactId="EBI-2339921">
        <id>Q9HCN8</id>
    </interactant>
    <interactant intactId="EBI-744081">
        <id>Q96EQ0</id>
        <label>SGTB</label>
    </interactant>
    <organismsDiffer>false</organismsDiffer>
    <experiments>3</experiments>
</comment>
<comment type="subcellular location">
    <subcellularLocation>
        <location evidence="3">Endoplasmic reticulum lumen</location>
    </subcellularLocation>
</comment>
<comment type="tissue specificity">
    <text evidence="4">Ubiquitously expressed with high expression in testis, moderate expression in the pancreas, spleen, prostate, small intestine and colon. Very low expression is seen in brain and skeletal muscle.</text>
</comment>
<feature type="signal peptide" evidence="1">
    <location>
        <begin position="1"/>
        <end position="28"/>
    </location>
</feature>
<feature type="chain" id="PRO_0000031957" description="Stromal cell-derived factor 2-like protein 1">
    <location>
        <begin position="29"/>
        <end position="221"/>
    </location>
</feature>
<feature type="domain" description="MIR 1" evidence="2">
    <location>
        <begin position="33"/>
        <end position="87"/>
    </location>
</feature>
<feature type="domain" description="MIR 2" evidence="2">
    <location>
        <begin position="95"/>
        <end position="150"/>
    </location>
</feature>
<feature type="domain" description="MIR 3" evidence="2">
    <location>
        <begin position="151"/>
        <end position="205"/>
    </location>
</feature>
<feature type="short sequence motif" description="Prevents secretion from ER" evidence="3">
    <location>
        <begin position="218"/>
        <end position="221"/>
    </location>
</feature>
<feature type="modified residue" description="Phosphoserine" evidence="7">
    <location>
        <position position="215"/>
    </location>
</feature>
<feature type="sequence conflict" description="In Ref. 1; BAB18277." evidence="6" ref="1">
    <original>R</original>
    <variation>C</variation>
    <location>
        <position position="94"/>
    </location>
</feature>
<feature type="sequence conflict" description="In Ref. 1; BAB18277." evidence="6" ref="1">
    <original>F</original>
    <variation>L</variation>
    <location>
        <position position="162"/>
    </location>
</feature>
<name>SDF2L_HUMAN</name>
<accession>Q9HCN8</accession>
<accession>A2RUD3</accession>
<accession>Q9BRI5</accession>
<proteinExistence type="evidence at protein level"/>
<keyword id="KW-0256">Endoplasmic reticulum</keyword>
<keyword id="KW-0597">Phosphoprotein</keyword>
<keyword id="KW-1267">Proteomics identification</keyword>
<keyword id="KW-1185">Reference proteome</keyword>
<keyword id="KW-0677">Repeat</keyword>
<keyword id="KW-0732">Signal</keyword>